<organism>
    <name type="scientific">Arabidopsis thaliana</name>
    <name type="common">Mouse-ear cress</name>
    <dbReference type="NCBI Taxonomy" id="3702"/>
    <lineage>
        <taxon>Eukaryota</taxon>
        <taxon>Viridiplantae</taxon>
        <taxon>Streptophyta</taxon>
        <taxon>Embryophyta</taxon>
        <taxon>Tracheophyta</taxon>
        <taxon>Spermatophyta</taxon>
        <taxon>Magnoliopsida</taxon>
        <taxon>eudicotyledons</taxon>
        <taxon>Gunneridae</taxon>
        <taxon>Pentapetalae</taxon>
        <taxon>rosids</taxon>
        <taxon>malvids</taxon>
        <taxon>Brassicales</taxon>
        <taxon>Brassicaceae</taxon>
        <taxon>Camelineae</taxon>
        <taxon>Arabidopsis</taxon>
    </lineage>
</organism>
<protein>
    <recommendedName>
        <fullName>Serine carboxypeptidase-like 36</fullName>
        <ecNumber>3.4.16.-</ecNumber>
    </recommendedName>
</protein>
<gene>
    <name type="primary">SCPL36</name>
    <name type="ordered locus">At3g52000</name>
    <name type="ORF">F4F15.110</name>
</gene>
<feature type="signal peptide" evidence="2">
    <location>
        <begin position="1"/>
        <end position="25"/>
    </location>
</feature>
<feature type="chain" id="PRO_0000274651" description="Serine carboxypeptidase-like 36">
    <location>
        <begin position="26"/>
        <end position="482"/>
    </location>
</feature>
<feature type="active site" evidence="3">
    <location>
        <position position="210"/>
    </location>
</feature>
<feature type="active site" evidence="3">
    <location>
        <position position="402"/>
    </location>
</feature>
<feature type="active site" evidence="3">
    <location>
        <position position="455"/>
    </location>
</feature>
<feature type="glycosylation site" description="N-linked (GlcNAc...) asparagine" evidence="2">
    <location>
        <position position="228"/>
    </location>
</feature>
<feature type="glycosylation site" description="N-linked (GlcNAc...) asparagine" evidence="2">
    <location>
        <position position="312"/>
    </location>
</feature>
<feature type="glycosylation site" description="N-linked (GlcNAc...) asparagine" evidence="2">
    <location>
        <position position="352"/>
    </location>
</feature>
<feature type="glycosylation site" description="N-linked (GlcNAc...) asparagine" evidence="2">
    <location>
        <position position="418"/>
    </location>
</feature>
<feature type="glycosylation site" description="N-linked (GlcNAc...) asparagine" evidence="2">
    <location>
        <position position="444"/>
    </location>
</feature>
<feature type="disulfide bond" evidence="1">
    <location>
        <begin position="119"/>
        <end position="363"/>
    </location>
</feature>
<feature type="disulfide bond" evidence="1">
    <location>
        <begin position="275"/>
        <end position="286"/>
    </location>
</feature>
<feature type="disulfide bond" evidence="1">
    <location>
        <begin position="310"/>
        <end position="331"/>
    </location>
</feature>
<sequence length="482" mass="54359">MGKRQDWSVTACIFLFLSLASQIHCRSHIPFPSPKRGVSSSGDTSHFNVIQRESVPSPKDKDLIQQLPGQPSDVTFKQYGGYVAVNKPAGRFLYYYFVETIKPGNTTPLVIWFNGGPGCSSLGGAFKELGPFRVHSDGKTLFRNPYSWNNEANVLFLETPVGTGFSYSNSPINGKQGDKATAEDNYMFLVNWLERFPEYKGRDIYIAGQSYAGHYVPQLAQIILHRNNQTLINLRGILIGNPSLNREIQDDFGYKFMFSHGLISQQQMDNYNKFCTDSDLYDWDKCHLASQKIEAQKTHLDIYNIYAPLCLNSTLSSEPKKCTTIMKADPCSGNYLKAYLNIKEVQEAIHANTTKIPYEWTSCNTKLLWEWNEKDRYVSLTPILQELMGKGVRVMLYNGDVDLVIPFTSTLAVVKTMNLTVVKEWRPWFTGGHVGGFTEDYKGNLTFVTVKGAGHSVPTDQPIHALNIFTSFIRNTPLPQTA</sequence>
<name>SCP36_ARATH</name>
<evidence type="ECO:0000250" key="1"/>
<evidence type="ECO:0000255" key="2"/>
<evidence type="ECO:0000255" key="3">
    <source>
        <dbReference type="PROSITE-ProRule" id="PRU10075"/>
    </source>
</evidence>
<evidence type="ECO:0000269" key="4">
    <source>
    </source>
</evidence>
<evidence type="ECO:0000305" key="5"/>
<comment type="function">
    <text evidence="1">Probable carboxypeptidase.</text>
</comment>
<comment type="subcellular location">
    <subcellularLocation>
        <location evidence="5">Secreted</location>
    </subcellularLocation>
</comment>
<comment type="tissue specificity">
    <text evidence="4">Expressed in seedlings, flowers and siliques.</text>
</comment>
<comment type="similarity">
    <text evidence="5">Belongs to the peptidase S10 family.</text>
</comment>
<dbReference type="EC" id="3.4.16.-"/>
<dbReference type="EMBL" id="AL049711">
    <property type="protein sequence ID" value="CAB41320.1"/>
    <property type="molecule type" value="Genomic_DNA"/>
</dbReference>
<dbReference type="EMBL" id="CP002686">
    <property type="protein sequence ID" value="AEE78873.1"/>
    <property type="molecule type" value="Genomic_DNA"/>
</dbReference>
<dbReference type="EMBL" id="DQ056620">
    <property type="protein sequence ID" value="AAY78768.1"/>
    <property type="molecule type" value="mRNA"/>
</dbReference>
<dbReference type="PIR" id="T49079">
    <property type="entry name" value="T49079"/>
</dbReference>
<dbReference type="RefSeq" id="NP_190768.1">
    <property type="nucleotide sequence ID" value="NM_115059.3"/>
</dbReference>
<dbReference type="SMR" id="Q9SV04"/>
<dbReference type="ESTHER" id="arath-SCP36">
    <property type="family name" value="Carboxypeptidase_S10"/>
</dbReference>
<dbReference type="MEROPS" id="S10.A37"/>
<dbReference type="GlyCosmos" id="Q9SV04">
    <property type="glycosylation" value="5 sites, No reported glycans"/>
</dbReference>
<dbReference type="GlyGen" id="Q9SV04">
    <property type="glycosylation" value="5 sites"/>
</dbReference>
<dbReference type="PaxDb" id="3702-AT3G52000.1"/>
<dbReference type="ProteomicsDB" id="232940"/>
<dbReference type="EnsemblPlants" id="AT3G52000.1">
    <property type="protein sequence ID" value="AT3G52000.1"/>
    <property type="gene ID" value="AT3G52000"/>
</dbReference>
<dbReference type="GeneID" id="824363"/>
<dbReference type="Gramene" id="AT3G52000.1">
    <property type="protein sequence ID" value="AT3G52000.1"/>
    <property type="gene ID" value="AT3G52000"/>
</dbReference>
<dbReference type="KEGG" id="ath:AT3G52000"/>
<dbReference type="Araport" id="AT3G52000"/>
<dbReference type="TAIR" id="AT3G52000">
    <property type="gene designation" value="SCPL36"/>
</dbReference>
<dbReference type="eggNOG" id="KOG1282">
    <property type="taxonomic scope" value="Eukaryota"/>
</dbReference>
<dbReference type="HOGENOM" id="CLU_008523_13_2_1"/>
<dbReference type="InParanoid" id="Q9SV04"/>
<dbReference type="OMA" id="IHGPHAN"/>
<dbReference type="PhylomeDB" id="Q9SV04"/>
<dbReference type="PRO" id="PR:Q9SV04"/>
<dbReference type="Proteomes" id="UP000006548">
    <property type="component" value="Chromosome 3"/>
</dbReference>
<dbReference type="ExpressionAtlas" id="Q9SV04">
    <property type="expression patterns" value="baseline and differential"/>
</dbReference>
<dbReference type="GO" id="GO:0005576">
    <property type="term" value="C:extracellular region"/>
    <property type="evidence" value="ECO:0007669"/>
    <property type="project" value="UniProtKB-SubCell"/>
</dbReference>
<dbReference type="GO" id="GO:0004185">
    <property type="term" value="F:serine-type carboxypeptidase activity"/>
    <property type="evidence" value="ECO:0007669"/>
    <property type="project" value="InterPro"/>
</dbReference>
<dbReference type="GO" id="GO:0006508">
    <property type="term" value="P:proteolysis"/>
    <property type="evidence" value="ECO:0007669"/>
    <property type="project" value="UniProtKB-KW"/>
</dbReference>
<dbReference type="FunFam" id="3.40.50.11320:FF:000002">
    <property type="entry name" value="Carboxypeptidase"/>
    <property type="match status" value="1"/>
</dbReference>
<dbReference type="FunFam" id="3.40.50.1820:FF:000211">
    <property type="entry name" value="Carboxypeptidase"/>
    <property type="match status" value="1"/>
</dbReference>
<dbReference type="Gene3D" id="3.40.50.11320">
    <property type="match status" value="1"/>
</dbReference>
<dbReference type="Gene3D" id="6.10.250.940">
    <property type="match status" value="1"/>
</dbReference>
<dbReference type="Gene3D" id="3.40.50.1820">
    <property type="entry name" value="alpha/beta hydrolase"/>
    <property type="match status" value="1"/>
</dbReference>
<dbReference type="InterPro" id="IPR029058">
    <property type="entry name" value="AB_hydrolase_fold"/>
</dbReference>
<dbReference type="InterPro" id="IPR001563">
    <property type="entry name" value="Peptidase_S10"/>
</dbReference>
<dbReference type="InterPro" id="IPR033124">
    <property type="entry name" value="Ser_caboxypep_his_AS"/>
</dbReference>
<dbReference type="PANTHER" id="PTHR11802:SF132">
    <property type="entry name" value="SERINE CARBOXYPEPTIDASE-LIKE 36-RELATED"/>
    <property type="match status" value="1"/>
</dbReference>
<dbReference type="PANTHER" id="PTHR11802">
    <property type="entry name" value="SERINE PROTEASE FAMILY S10 SERINE CARBOXYPEPTIDASE"/>
    <property type="match status" value="1"/>
</dbReference>
<dbReference type="Pfam" id="PF00450">
    <property type="entry name" value="Peptidase_S10"/>
    <property type="match status" value="1"/>
</dbReference>
<dbReference type="PRINTS" id="PR00724">
    <property type="entry name" value="CRBOXYPTASEC"/>
</dbReference>
<dbReference type="SUPFAM" id="SSF53474">
    <property type="entry name" value="alpha/beta-Hydrolases"/>
    <property type="match status" value="1"/>
</dbReference>
<dbReference type="PROSITE" id="PS00560">
    <property type="entry name" value="CARBOXYPEPT_SER_HIS"/>
    <property type="match status" value="1"/>
</dbReference>
<proteinExistence type="evidence at transcript level"/>
<reference key="1">
    <citation type="journal article" date="2000" name="Nature">
        <title>Sequence and analysis of chromosome 3 of the plant Arabidopsis thaliana.</title>
        <authorList>
            <person name="Salanoubat M."/>
            <person name="Lemcke K."/>
            <person name="Rieger M."/>
            <person name="Ansorge W."/>
            <person name="Unseld M."/>
            <person name="Fartmann B."/>
            <person name="Valle G."/>
            <person name="Bloecker H."/>
            <person name="Perez-Alonso M."/>
            <person name="Obermaier B."/>
            <person name="Delseny M."/>
            <person name="Boutry M."/>
            <person name="Grivell L.A."/>
            <person name="Mache R."/>
            <person name="Puigdomenech P."/>
            <person name="De Simone V."/>
            <person name="Choisne N."/>
            <person name="Artiguenave F."/>
            <person name="Robert C."/>
            <person name="Brottier P."/>
            <person name="Wincker P."/>
            <person name="Cattolico L."/>
            <person name="Weissenbach J."/>
            <person name="Saurin W."/>
            <person name="Quetier F."/>
            <person name="Schaefer M."/>
            <person name="Mueller-Auer S."/>
            <person name="Gabel C."/>
            <person name="Fuchs M."/>
            <person name="Benes V."/>
            <person name="Wurmbach E."/>
            <person name="Drzonek H."/>
            <person name="Erfle H."/>
            <person name="Jordan N."/>
            <person name="Bangert S."/>
            <person name="Wiedelmann R."/>
            <person name="Kranz H."/>
            <person name="Voss H."/>
            <person name="Holland R."/>
            <person name="Brandt P."/>
            <person name="Nyakatura G."/>
            <person name="Vezzi A."/>
            <person name="D'Angelo M."/>
            <person name="Pallavicini A."/>
            <person name="Toppo S."/>
            <person name="Simionati B."/>
            <person name="Conrad A."/>
            <person name="Hornischer K."/>
            <person name="Kauer G."/>
            <person name="Loehnert T.-H."/>
            <person name="Nordsiek G."/>
            <person name="Reichelt J."/>
            <person name="Scharfe M."/>
            <person name="Schoen O."/>
            <person name="Bargues M."/>
            <person name="Terol J."/>
            <person name="Climent J."/>
            <person name="Navarro P."/>
            <person name="Collado C."/>
            <person name="Perez-Perez A."/>
            <person name="Ottenwaelder B."/>
            <person name="Duchemin D."/>
            <person name="Cooke R."/>
            <person name="Laudie M."/>
            <person name="Berger-Llauro C."/>
            <person name="Purnelle B."/>
            <person name="Masuy D."/>
            <person name="de Haan M."/>
            <person name="Maarse A.C."/>
            <person name="Alcaraz J.-P."/>
            <person name="Cottet A."/>
            <person name="Casacuberta E."/>
            <person name="Monfort A."/>
            <person name="Argiriou A."/>
            <person name="Flores M."/>
            <person name="Liguori R."/>
            <person name="Vitale D."/>
            <person name="Mannhaupt G."/>
            <person name="Haase D."/>
            <person name="Schoof H."/>
            <person name="Rudd S."/>
            <person name="Zaccaria P."/>
            <person name="Mewes H.-W."/>
            <person name="Mayer K.F.X."/>
            <person name="Kaul S."/>
            <person name="Town C.D."/>
            <person name="Koo H.L."/>
            <person name="Tallon L.J."/>
            <person name="Jenkins J."/>
            <person name="Rooney T."/>
            <person name="Rizzo M."/>
            <person name="Walts A."/>
            <person name="Utterback T."/>
            <person name="Fujii C.Y."/>
            <person name="Shea T.P."/>
            <person name="Creasy T.H."/>
            <person name="Haas B."/>
            <person name="Maiti R."/>
            <person name="Wu D."/>
            <person name="Peterson J."/>
            <person name="Van Aken S."/>
            <person name="Pai G."/>
            <person name="Militscher J."/>
            <person name="Sellers P."/>
            <person name="Gill J.E."/>
            <person name="Feldblyum T.V."/>
            <person name="Preuss D."/>
            <person name="Lin X."/>
            <person name="Nierman W.C."/>
            <person name="Salzberg S.L."/>
            <person name="White O."/>
            <person name="Venter J.C."/>
            <person name="Fraser C.M."/>
            <person name="Kaneko T."/>
            <person name="Nakamura Y."/>
            <person name="Sato S."/>
            <person name="Kato T."/>
            <person name="Asamizu E."/>
            <person name="Sasamoto S."/>
            <person name="Kimura T."/>
            <person name="Idesawa K."/>
            <person name="Kawashima K."/>
            <person name="Kishida Y."/>
            <person name="Kiyokawa C."/>
            <person name="Kohara M."/>
            <person name="Matsumoto M."/>
            <person name="Matsuno A."/>
            <person name="Muraki A."/>
            <person name="Nakayama S."/>
            <person name="Nakazaki N."/>
            <person name="Shinpo S."/>
            <person name="Takeuchi C."/>
            <person name="Wada T."/>
            <person name="Watanabe A."/>
            <person name="Yamada M."/>
            <person name="Yasuda M."/>
            <person name="Tabata S."/>
        </authorList>
    </citation>
    <scope>NUCLEOTIDE SEQUENCE [LARGE SCALE GENOMIC DNA]</scope>
    <source>
        <strain>cv. Columbia</strain>
    </source>
</reference>
<reference key="2">
    <citation type="journal article" date="2017" name="Plant J.">
        <title>Araport11: a complete reannotation of the Arabidopsis thaliana reference genome.</title>
        <authorList>
            <person name="Cheng C.Y."/>
            <person name="Krishnakumar V."/>
            <person name="Chan A.P."/>
            <person name="Thibaud-Nissen F."/>
            <person name="Schobel S."/>
            <person name="Town C.D."/>
        </authorList>
    </citation>
    <scope>GENOME REANNOTATION</scope>
    <source>
        <strain>cv. Columbia</strain>
    </source>
</reference>
<reference key="3">
    <citation type="submission" date="2005-05" db="EMBL/GenBank/DDBJ databases">
        <authorList>
            <person name="Underwood B.A."/>
            <person name="Xiao Y.-L."/>
            <person name="Moskal W.A. Jr."/>
            <person name="Monaghan E.L."/>
            <person name="Wang W."/>
            <person name="Redman J.C."/>
            <person name="Wu H.C."/>
            <person name="Utterback T."/>
            <person name="Town C.D."/>
        </authorList>
    </citation>
    <scope>NUCLEOTIDE SEQUENCE [LARGE SCALE MRNA]</scope>
    <source>
        <strain>cv. Columbia</strain>
    </source>
</reference>
<reference key="4">
    <citation type="journal article" date="2005" name="Plant Physiol.">
        <title>An expression and bioinformatics analysis of the Arabidopsis serine carboxypeptidase-like gene family.</title>
        <authorList>
            <person name="Fraser C.M."/>
            <person name="Rider L.W."/>
            <person name="Chapple C."/>
        </authorList>
    </citation>
    <scope>GENE FAMILY</scope>
    <scope>TISSUE SPECIFICITY</scope>
    <scope>NOMENCLATURE</scope>
</reference>
<keyword id="KW-0121">Carboxypeptidase</keyword>
<keyword id="KW-1015">Disulfide bond</keyword>
<keyword id="KW-0325">Glycoprotein</keyword>
<keyword id="KW-0378">Hydrolase</keyword>
<keyword id="KW-0645">Protease</keyword>
<keyword id="KW-1185">Reference proteome</keyword>
<keyword id="KW-0964">Secreted</keyword>
<keyword id="KW-0732">Signal</keyword>
<accession>Q9SV04</accession>